<dbReference type="EMBL" id="BC103276">
    <property type="protein sequence ID" value="AAI03277.1"/>
    <property type="molecule type" value="mRNA"/>
</dbReference>
<dbReference type="RefSeq" id="NP_001029395.1">
    <property type="nucleotide sequence ID" value="NM_001034223.2"/>
</dbReference>
<dbReference type="RefSeq" id="XP_015321413.1">
    <property type="nucleotide sequence ID" value="XM_015465927.1"/>
</dbReference>
<dbReference type="SMR" id="Q3ZBI6"/>
<dbReference type="FunCoup" id="Q3ZBI6">
    <property type="interactions" value="267"/>
</dbReference>
<dbReference type="STRING" id="9913.ENSBTAP00000009604"/>
<dbReference type="PaxDb" id="9913-ENSBTAP00000009604"/>
<dbReference type="Ensembl" id="ENSBTAT00000009604.5">
    <property type="protein sequence ID" value="ENSBTAP00000009604.3"/>
    <property type="gene ID" value="ENSBTAG00000007300.5"/>
</dbReference>
<dbReference type="GeneID" id="504795"/>
<dbReference type="KEGG" id="bta:504795"/>
<dbReference type="CTD" id="2275"/>
<dbReference type="VEuPathDB" id="HostDB:ENSBTAG00000007300"/>
<dbReference type="VGNC" id="VGNC:29001">
    <property type="gene designation" value="FHL3"/>
</dbReference>
<dbReference type="eggNOG" id="KOG1704">
    <property type="taxonomic scope" value="Eukaryota"/>
</dbReference>
<dbReference type="GeneTree" id="ENSGT00950000183028"/>
<dbReference type="HOGENOM" id="CLU_001357_2_0_1"/>
<dbReference type="InParanoid" id="Q3ZBI6"/>
<dbReference type="OMA" id="QWHQTCF"/>
<dbReference type="OrthoDB" id="274660at2759"/>
<dbReference type="TreeFam" id="TF314113"/>
<dbReference type="Proteomes" id="UP000009136">
    <property type="component" value="Chromosome 3"/>
</dbReference>
<dbReference type="Bgee" id="ENSBTAG00000007300">
    <property type="expression patterns" value="Expressed in laryngeal cartilage and 104 other cell types or tissues"/>
</dbReference>
<dbReference type="GO" id="GO:0005634">
    <property type="term" value="C:nucleus"/>
    <property type="evidence" value="ECO:0000318"/>
    <property type="project" value="GO_Central"/>
</dbReference>
<dbReference type="GO" id="GO:0001725">
    <property type="term" value="C:stress fiber"/>
    <property type="evidence" value="ECO:0000318"/>
    <property type="project" value="GO_Central"/>
</dbReference>
<dbReference type="GO" id="GO:0030018">
    <property type="term" value="C:Z disc"/>
    <property type="evidence" value="ECO:0000318"/>
    <property type="project" value="GO_Central"/>
</dbReference>
<dbReference type="GO" id="GO:0003779">
    <property type="term" value="F:actin binding"/>
    <property type="evidence" value="ECO:0000318"/>
    <property type="project" value="GO_Central"/>
</dbReference>
<dbReference type="GO" id="GO:0003712">
    <property type="term" value="F:transcription coregulator activity"/>
    <property type="evidence" value="ECO:0000318"/>
    <property type="project" value="GO_Central"/>
</dbReference>
<dbReference type="GO" id="GO:0008270">
    <property type="term" value="F:zinc ion binding"/>
    <property type="evidence" value="ECO:0007669"/>
    <property type="project" value="UniProtKB-KW"/>
</dbReference>
<dbReference type="GO" id="GO:0030036">
    <property type="term" value="P:actin cytoskeleton organization"/>
    <property type="evidence" value="ECO:0000318"/>
    <property type="project" value="GO_Central"/>
</dbReference>
<dbReference type="CDD" id="cd09423">
    <property type="entry name" value="LIM1_FHL3"/>
    <property type="match status" value="1"/>
</dbReference>
<dbReference type="CDD" id="cd09427">
    <property type="entry name" value="LIM2_FHL3"/>
    <property type="match status" value="1"/>
</dbReference>
<dbReference type="CDD" id="cd09346">
    <property type="entry name" value="LIM3_FHL"/>
    <property type="match status" value="1"/>
</dbReference>
<dbReference type="CDD" id="cd09434">
    <property type="entry name" value="LIM4_FHL3"/>
    <property type="match status" value="1"/>
</dbReference>
<dbReference type="FunFam" id="2.10.110.10:FF:000013">
    <property type="entry name" value="Four and a half LIM domains 1"/>
    <property type="match status" value="1"/>
</dbReference>
<dbReference type="FunFam" id="2.10.110.10:FF:000030">
    <property type="entry name" value="Four and a half LIM domains protein 2"/>
    <property type="match status" value="1"/>
</dbReference>
<dbReference type="FunFam" id="2.10.110.10:FF:000064">
    <property type="entry name" value="Four and a half LIM domains protein 3"/>
    <property type="match status" value="1"/>
</dbReference>
<dbReference type="FunFam" id="2.10.110.10:FF:000095">
    <property type="entry name" value="four and a half LIM domains protein 3"/>
    <property type="match status" value="1"/>
</dbReference>
<dbReference type="Gene3D" id="2.10.110.10">
    <property type="entry name" value="Cysteine Rich Protein"/>
    <property type="match status" value="5"/>
</dbReference>
<dbReference type="InterPro" id="IPR056807">
    <property type="entry name" value="LIM_FHL1/2/3/5_N"/>
</dbReference>
<dbReference type="InterPro" id="IPR001781">
    <property type="entry name" value="Znf_LIM"/>
</dbReference>
<dbReference type="PANTHER" id="PTHR24205">
    <property type="entry name" value="FOUR AND A HALF LIM DOMAINS PROTEIN"/>
    <property type="match status" value="1"/>
</dbReference>
<dbReference type="PANTHER" id="PTHR24205:SF5">
    <property type="entry name" value="FOUR AND A HALF LIM DOMAINS PROTEIN 3"/>
    <property type="match status" value="1"/>
</dbReference>
<dbReference type="Pfam" id="PF00412">
    <property type="entry name" value="LIM"/>
    <property type="match status" value="4"/>
</dbReference>
<dbReference type="Pfam" id="PF25076">
    <property type="entry name" value="LIM_FHL2-3_N"/>
    <property type="match status" value="1"/>
</dbReference>
<dbReference type="SMART" id="SM00132">
    <property type="entry name" value="LIM"/>
    <property type="match status" value="4"/>
</dbReference>
<dbReference type="SUPFAM" id="SSF57716">
    <property type="entry name" value="Glucocorticoid receptor-like (DNA-binding domain)"/>
    <property type="match status" value="5"/>
</dbReference>
<dbReference type="PROSITE" id="PS00478">
    <property type="entry name" value="LIM_DOMAIN_1"/>
    <property type="match status" value="4"/>
</dbReference>
<dbReference type="PROSITE" id="PS50023">
    <property type="entry name" value="LIM_DOMAIN_2"/>
    <property type="match status" value="4"/>
</dbReference>
<accession>Q3ZBI6</accession>
<protein>
    <recommendedName>
        <fullName>Four and a half LIM domains protein 3</fullName>
        <shortName>FHL-3</shortName>
    </recommendedName>
</protein>
<keyword id="KW-0007">Acetylation</keyword>
<keyword id="KW-0010">Activator</keyword>
<keyword id="KW-0963">Cytoplasm</keyword>
<keyword id="KW-0440">LIM domain</keyword>
<keyword id="KW-0479">Metal-binding</keyword>
<keyword id="KW-0539">Nucleus</keyword>
<keyword id="KW-1185">Reference proteome</keyword>
<keyword id="KW-0677">Repeat</keyword>
<keyword id="KW-0804">Transcription</keyword>
<keyword id="KW-0805">Transcription regulation</keyword>
<keyword id="KW-0862">Zinc</keyword>
<keyword id="KW-0863">Zinc-finger</keyword>
<comment type="function">
    <text evidence="2">Recruited by SOX15 to FOXK1 promoters where it acts as a transcriptional coactivator of FOXK1.</text>
</comment>
<comment type="subunit">
    <text evidence="2">Interacts with SOX15; the interaction recruits FHL3 to FOXK1 promoters where it acts as a transcriptional coactivator of FOXK1.</text>
</comment>
<comment type="subcellular location">
    <subcellularLocation>
        <location evidence="2">Nucleus</location>
    </subcellularLocation>
    <subcellularLocation>
        <location evidence="2">Cytoplasm</location>
    </subcellularLocation>
</comment>
<gene>
    <name type="primary">FHL3</name>
</gene>
<name>FHL3_BOVIN</name>
<reference key="1">
    <citation type="submission" date="2005-08" db="EMBL/GenBank/DDBJ databases">
        <authorList>
            <consortium name="NIH - Mammalian Gene Collection (MGC) project"/>
        </authorList>
    </citation>
    <scope>NUCLEOTIDE SEQUENCE [LARGE SCALE MRNA]</scope>
    <source>
        <strain>Hereford</strain>
        <tissue>Heart ventricle</tissue>
    </source>
</reference>
<evidence type="ECO:0000250" key="1">
    <source>
        <dbReference type="UniProtKB" id="Q13643"/>
    </source>
</evidence>
<evidence type="ECO:0000250" key="2">
    <source>
        <dbReference type="UniProtKB" id="Q9R059"/>
    </source>
</evidence>
<evidence type="ECO:0000255" key="3"/>
<evidence type="ECO:0000255" key="4">
    <source>
        <dbReference type="PROSITE-ProRule" id="PRU00125"/>
    </source>
</evidence>
<sequence length="280" mass="31182">MSEAFDCAKCSESLYGRKYIQTDDGPYCVPCYDNTFANTCAECQQLIGHDSRELFYEDRHFHEGCFRCCRCQRSLADEPFTCQDSELLCNDCYCSAFSSQCSACGETVMPGSRKLEYGGQTWHEHCFLCSGCEQPLGSRSFVPDKGAHYCVPCYENKFAPRCARCSKTLTQGGVTYRDQPWHRECLVCTGCQTPLAGQQFTSREDDPYCVTCFGELFAPKCSSCKRPITGLGGGKYVSFEDRHWHHSCFSCARCSTSLVGQGFVPDGDQVLCQGCSQAGP</sequence>
<organism>
    <name type="scientific">Bos taurus</name>
    <name type="common">Bovine</name>
    <dbReference type="NCBI Taxonomy" id="9913"/>
    <lineage>
        <taxon>Eukaryota</taxon>
        <taxon>Metazoa</taxon>
        <taxon>Chordata</taxon>
        <taxon>Craniata</taxon>
        <taxon>Vertebrata</taxon>
        <taxon>Euteleostomi</taxon>
        <taxon>Mammalia</taxon>
        <taxon>Eutheria</taxon>
        <taxon>Laurasiatheria</taxon>
        <taxon>Artiodactyla</taxon>
        <taxon>Ruminantia</taxon>
        <taxon>Pecora</taxon>
        <taxon>Bovidae</taxon>
        <taxon>Bovinae</taxon>
        <taxon>Bos</taxon>
    </lineage>
</organism>
<proteinExistence type="evidence at transcript level"/>
<feature type="initiator methionine" description="Removed" evidence="1">
    <location>
        <position position="1"/>
    </location>
</feature>
<feature type="chain" id="PRO_0000284661" description="Four and a half LIM domains protein 3">
    <location>
        <begin position="2"/>
        <end position="280"/>
    </location>
</feature>
<feature type="domain" description="LIM zinc-binding 1" evidence="4">
    <location>
        <begin position="40"/>
        <end position="92"/>
    </location>
</feature>
<feature type="domain" description="LIM zinc-binding 2" evidence="4">
    <location>
        <begin position="101"/>
        <end position="153"/>
    </location>
</feature>
<feature type="domain" description="LIM zinc-binding 3" evidence="4">
    <location>
        <begin position="162"/>
        <end position="212"/>
    </location>
</feature>
<feature type="domain" description="LIM zinc-binding 4" evidence="4">
    <location>
        <begin position="221"/>
        <end position="275"/>
    </location>
</feature>
<feature type="zinc finger region" description="C4-type" evidence="3">
    <location>
        <begin position="7"/>
        <end position="31"/>
    </location>
</feature>
<feature type="modified residue" description="N-acetylserine" evidence="1">
    <location>
        <position position="2"/>
    </location>
</feature>
<feature type="modified residue" description="N6-acetyllysine" evidence="2">
    <location>
        <position position="157"/>
    </location>
</feature>
<feature type="modified residue" description="N6-acetyllysine" evidence="2">
    <location>
        <position position="235"/>
    </location>
</feature>